<reference key="1">
    <citation type="journal article" date="2001" name="J. Bacteriol.">
        <title>Genome of the bacterium Streptococcus pneumoniae strain R6.</title>
        <authorList>
            <person name="Hoskins J."/>
            <person name="Alborn W.E. Jr."/>
            <person name="Arnold J."/>
            <person name="Blaszczak L.C."/>
            <person name="Burgett S."/>
            <person name="DeHoff B.S."/>
            <person name="Estrem S.T."/>
            <person name="Fritz L."/>
            <person name="Fu D.-J."/>
            <person name="Fuller W."/>
            <person name="Geringer C."/>
            <person name="Gilmour R."/>
            <person name="Glass J.S."/>
            <person name="Khoja H."/>
            <person name="Kraft A.R."/>
            <person name="Lagace R.E."/>
            <person name="LeBlanc D.J."/>
            <person name="Lee L.N."/>
            <person name="Lefkowitz E.J."/>
            <person name="Lu J."/>
            <person name="Matsushima P."/>
            <person name="McAhren S.M."/>
            <person name="McHenney M."/>
            <person name="McLeaster K."/>
            <person name="Mundy C.W."/>
            <person name="Nicas T.I."/>
            <person name="Norris F.H."/>
            <person name="O'Gara M."/>
            <person name="Peery R.B."/>
            <person name="Robertson G.T."/>
            <person name="Rockey P."/>
            <person name="Sun P.-M."/>
            <person name="Winkler M.E."/>
            <person name="Yang Y."/>
            <person name="Young-Bellido M."/>
            <person name="Zhao G."/>
            <person name="Zook C.A."/>
            <person name="Baltz R.H."/>
            <person name="Jaskunas S.R."/>
            <person name="Rosteck P.R. Jr."/>
            <person name="Skatrud P.L."/>
            <person name="Glass J.I."/>
        </authorList>
    </citation>
    <scope>NUCLEOTIDE SEQUENCE [LARGE SCALE GENOMIC DNA]</scope>
    <source>
        <strain>ATCC BAA-255 / R6</strain>
    </source>
</reference>
<protein>
    <recommendedName>
        <fullName evidence="1">Large ribosomal subunit protein uL2</fullName>
    </recommendedName>
    <alternativeName>
        <fullName evidence="3">50S ribosomal protein L2</fullName>
    </alternativeName>
</protein>
<keyword id="KW-1185">Reference proteome</keyword>
<keyword id="KW-0687">Ribonucleoprotein</keyword>
<keyword id="KW-0689">Ribosomal protein</keyword>
<keyword id="KW-0694">RNA-binding</keyword>
<keyword id="KW-0699">rRNA-binding</keyword>
<accession>Q8CWV5</accession>
<feature type="chain" id="PRO_0000129631" description="Large ribosomal subunit protein uL2">
    <location>
        <begin position="1"/>
        <end position="277"/>
    </location>
</feature>
<feature type="region of interest" description="Disordered" evidence="2">
    <location>
        <begin position="219"/>
        <end position="277"/>
    </location>
</feature>
<feature type="compositionally biased region" description="Basic and acidic residues" evidence="2">
    <location>
        <begin position="264"/>
        <end position="277"/>
    </location>
</feature>
<organism>
    <name type="scientific">Streptococcus pneumoniae (strain ATCC BAA-255 / R6)</name>
    <dbReference type="NCBI Taxonomy" id="171101"/>
    <lineage>
        <taxon>Bacteria</taxon>
        <taxon>Bacillati</taxon>
        <taxon>Bacillota</taxon>
        <taxon>Bacilli</taxon>
        <taxon>Lactobacillales</taxon>
        <taxon>Streptococcaceae</taxon>
        <taxon>Streptococcus</taxon>
    </lineage>
</organism>
<comment type="function">
    <text evidence="1">One of the primary rRNA binding proteins. Required for association of the 30S and 50S subunits to form the 70S ribosome, for tRNA binding and peptide bond formation. It has been suggested to have peptidyltransferase activity; this is somewhat controversial. Makes several contacts with the 16S rRNA in the 70S ribosome.</text>
</comment>
<comment type="subunit">
    <text evidence="1">Part of the 50S ribosomal subunit. Forms a bridge to the 30S subunit in the 70S ribosome.</text>
</comment>
<comment type="similarity">
    <text evidence="1">Belongs to the universal ribosomal protein uL2 family.</text>
</comment>
<proteinExistence type="inferred from homology"/>
<evidence type="ECO:0000255" key="1">
    <source>
        <dbReference type="HAMAP-Rule" id="MF_01320"/>
    </source>
</evidence>
<evidence type="ECO:0000256" key="2">
    <source>
        <dbReference type="SAM" id="MobiDB-lite"/>
    </source>
</evidence>
<evidence type="ECO:0000305" key="3"/>
<gene>
    <name evidence="1" type="primary">rplB</name>
    <name type="ordered locus">spr0191</name>
</gene>
<dbReference type="EMBL" id="AE007317">
    <property type="protein sequence ID" value="AAK98995.1"/>
    <property type="molecule type" value="Genomic_DNA"/>
</dbReference>
<dbReference type="PIR" id="G95024">
    <property type="entry name" value="G95024"/>
</dbReference>
<dbReference type="PIR" id="G97895">
    <property type="entry name" value="G97895"/>
</dbReference>
<dbReference type="RefSeq" id="NP_357785.1">
    <property type="nucleotide sequence ID" value="NC_003098.1"/>
</dbReference>
<dbReference type="RefSeq" id="WP_000512911.1">
    <property type="nucleotide sequence ID" value="NC_003098.1"/>
</dbReference>
<dbReference type="SMR" id="Q8CWV5"/>
<dbReference type="STRING" id="171101.spr0191"/>
<dbReference type="GeneID" id="93738960"/>
<dbReference type="KEGG" id="spr:spr0191"/>
<dbReference type="PATRIC" id="fig|171101.6.peg.223"/>
<dbReference type="eggNOG" id="COG0090">
    <property type="taxonomic scope" value="Bacteria"/>
</dbReference>
<dbReference type="HOGENOM" id="CLU_036235_2_1_9"/>
<dbReference type="PRO" id="PR:Q8CWV5"/>
<dbReference type="Proteomes" id="UP000000586">
    <property type="component" value="Chromosome"/>
</dbReference>
<dbReference type="GO" id="GO:0015934">
    <property type="term" value="C:large ribosomal subunit"/>
    <property type="evidence" value="ECO:0007669"/>
    <property type="project" value="InterPro"/>
</dbReference>
<dbReference type="GO" id="GO:0003723">
    <property type="term" value="F:RNA binding"/>
    <property type="evidence" value="ECO:0000318"/>
    <property type="project" value="GO_Central"/>
</dbReference>
<dbReference type="GO" id="GO:0019843">
    <property type="term" value="F:rRNA binding"/>
    <property type="evidence" value="ECO:0007669"/>
    <property type="project" value="UniProtKB-UniRule"/>
</dbReference>
<dbReference type="GO" id="GO:0003735">
    <property type="term" value="F:structural constituent of ribosome"/>
    <property type="evidence" value="ECO:0000318"/>
    <property type="project" value="GO_Central"/>
</dbReference>
<dbReference type="GO" id="GO:0016740">
    <property type="term" value="F:transferase activity"/>
    <property type="evidence" value="ECO:0007669"/>
    <property type="project" value="InterPro"/>
</dbReference>
<dbReference type="GO" id="GO:0002181">
    <property type="term" value="P:cytoplasmic translation"/>
    <property type="evidence" value="ECO:0000318"/>
    <property type="project" value="GO_Central"/>
</dbReference>
<dbReference type="FunFam" id="2.30.30.30:FF:000001">
    <property type="entry name" value="50S ribosomal protein L2"/>
    <property type="match status" value="1"/>
</dbReference>
<dbReference type="FunFam" id="2.40.50.140:FF:000003">
    <property type="entry name" value="50S ribosomal protein L2"/>
    <property type="match status" value="1"/>
</dbReference>
<dbReference type="FunFam" id="4.10.950.10:FF:000001">
    <property type="entry name" value="50S ribosomal protein L2"/>
    <property type="match status" value="1"/>
</dbReference>
<dbReference type="Gene3D" id="2.30.30.30">
    <property type="match status" value="1"/>
</dbReference>
<dbReference type="Gene3D" id="2.40.50.140">
    <property type="entry name" value="Nucleic acid-binding proteins"/>
    <property type="match status" value="1"/>
</dbReference>
<dbReference type="Gene3D" id="4.10.950.10">
    <property type="entry name" value="Ribosomal protein L2, domain 3"/>
    <property type="match status" value="1"/>
</dbReference>
<dbReference type="HAMAP" id="MF_01320_B">
    <property type="entry name" value="Ribosomal_uL2_B"/>
    <property type="match status" value="1"/>
</dbReference>
<dbReference type="InterPro" id="IPR012340">
    <property type="entry name" value="NA-bd_OB-fold"/>
</dbReference>
<dbReference type="InterPro" id="IPR014722">
    <property type="entry name" value="Rib_uL2_dom2"/>
</dbReference>
<dbReference type="InterPro" id="IPR002171">
    <property type="entry name" value="Ribosomal_uL2"/>
</dbReference>
<dbReference type="InterPro" id="IPR005880">
    <property type="entry name" value="Ribosomal_uL2_bac/org-type"/>
</dbReference>
<dbReference type="InterPro" id="IPR022669">
    <property type="entry name" value="Ribosomal_uL2_C"/>
</dbReference>
<dbReference type="InterPro" id="IPR022671">
    <property type="entry name" value="Ribosomal_uL2_CS"/>
</dbReference>
<dbReference type="InterPro" id="IPR014726">
    <property type="entry name" value="Ribosomal_uL2_dom3"/>
</dbReference>
<dbReference type="InterPro" id="IPR022666">
    <property type="entry name" value="Ribosomal_uL2_RNA-bd_dom"/>
</dbReference>
<dbReference type="InterPro" id="IPR008991">
    <property type="entry name" value="Translation_prot_SH3-like_sf"/>
</dbReference>
<dbReference type="NCBIfam" id="TIGR01171">
    <property type="entry name" value="rplB_bact"/>
    <property type="match status" value="1"/>
</dbReference>
<dbReference type="PANTHER" id="PTHR13691:SF5">
    <property type="entry name" value="LARGE RIBOSOMAL SUBUNIT PROTEIN UL2M"/>
    <property type="match status" value="1"/>
</dbReference>
<dbReference type="PANTHER" id="PTHR13691">
    <property type="entry name" value="RIBOSOMAL PROTEIN L2"/>
    <property type="match status" value="1"/>
</dbReference>
<dbReference type="Pfam" id="PF00181">
    <property type="entry name" value="Ribosomal_L2"/>
    <property type="match status" value="1"/>
</dbReference>
<dbReference type="Pfam" id="PF03947">
    <property type="entry name" value="Ribosomal_L2_C"/>
    <property type="match status" value="1"/>
</dbReference>
<dbReference type="PIRSF" id="PIRSF002158">
    <property type="entry name" value="Ribosomal_L2"/>
    <property type="match status" value="1"/>
</dbReference>
<dbReference type="SMART" id="SM01383">
    <property type="entry name" value="Ribosomal_L2"/>
    <property type="match status" value="1"/>
</dbReference>
<dbReference type="SMART" id="SM01382">
    <property type="entry name" value="Ribosomal_L2_C"/>
    <property type="match status" value="1"/>
</dbReference>
<dbReference type="SUPFAM" id="SSF50249">
    <property type="entry name" value="Nucleic acid-binding proteins"/>
    <property type="match status" value="1"/>
</dbReference>
<dbReference type="SUPFAM" id="SSF50104">
    <property type="entry name" value="Translation proteins SH3-like domain"/>
    <property type="match status" value="1"/>
</dbReference>
<dbReference type="PROSITE" id="PS00467">
    <property type="entry name" value="RIBOSOMAL_L2"/>
    <property type="match status" value="1"/>
</dbReference>
<sequence length="277" mass="29920">MGIRVYKPTTNGRRNMTSLDFAEITTSTPEKSLLVALKSKAGRNNNGRITVRHQGGGHKRFYRLVDFKRNKDNVEAVVKTIEYDPNRSANIALVHYTDGVKAYIIAPKGLEVGQRIVSGPEADIKVGNALPLANIPVGTLIHNIELKPGRGGELVRAAGASAQVLGSEGKYVLVRLQSGEVRMILGTCRATVGVVGNEQHGLVNLGKAGRSRWKGIRPTVRGSVMNPNDHPHGGGEGKAPVGRKAPSTPWGKPALGLKTRNKKAKSDKLIVRRRNEK</sequence>
<name>RL2_STRR6</name>